<feature type="chain" id="PRO_0000290792" description="Small ribosomal subunit protein uS8">
    <location>
        <begin position="1"/>
        <end position="131"/>
    </location>
</feature>
<organism>
    <name type="scientific">Paracidovorax citrulli (strain AAC00-1)</name>
    <name type="common">Acidovorax citrulli</name>
    <dbReference type="NCBI Taxonomy" id="397945"/>
    <lineage>
        <taxon>Bacteria</taxon>
        <taxon>Pseudomonadati</taxon>
        <taxon>Pseudomonadota</taxon>
        <taxon>Betaproteobacteria</taxon>
        <taxon>Burkholderiales</taxon>
        <taxon>Comamonadaceae</taxon>
        <taxon>Paracidovorax</taxon>
    </lineage>
</organism>
<comment type="function">
    <text evidence="1">One of the primary rRNA binding proteins, it binds directly to 16S rRNA central domain where it helps coordinate assembly of the platform of the 30S subunit.</text>
</comment>
<comment type="subunit">
    <text evidence="1">Part of the 30S ribosomal subunit. Contacts proteins S5 and S12.</text>
</comment>
<comment type="similarity">
    <text evidence="1">Belongs to the universal ribosomal protein uS8 family.</text>
</comment>
<sequence length="131" mass="14200">MSMSDPIADLLTRIRNAQMVSKATVSVPSSKVKIAIAQVLKDEGYIDGFEVKSEGNKSELEISLKYYAGRPVIERIERVSRPGLRVYKGRDSIPQVMNGLGVAIVTTPKGVMTDRKARATGVGGEVLCYVA</sequence>
<protein>
    <recommendedName>
        <fullName evidence="1">Small ribosomal subunit protein uS8</fullName>
    </recommendedName>
    <alternativeName>
        <fullName evidence="2">30S ribosomal protein S8</fullName>
    </alternativeName>
</protein>
<reference key="1">
    <citation type="submission" date="2006-12" db="EMBL/GenBank/DDBJ databases">
        <title>Complete sequence of Acidovorax avenae subsp. citrulli AAC00-1.</title>
        <authorList>
            <person name="Copeland A."/>
            <person name="Lucas S."/>
            <person name="Lapidus A."/>
            <person name="Barry K."/>
            <person name="Detter J.C."/>
            <person name="Glavina del Rio T."/>
            <person name="Dalin E."/>
            <person name="Tice H."/>
            <person name="Pitluck S."/>
            <person name="Kiss H."/>
            <person name="Brettin T."/>
            <person name="Bruce D."/>
            <person name="Han C."/>
            <person name="Tapia R."/>
            <person name="Gilna P."/>
            <person name="Schmutz J."/>
            <person name="Larimer F."/>
            <person name="Land M."/>
            <person name="Hauser L."/>
            <person name="Kyrpides N."/>
            <person name="Kim E."/>
            <person name="Stahl D."/>
            <person name="Richardson P."/>
        </authorList>
    </citation>
    <scope>NUCLEOTIDE SEQUENCE [LARGE SCALE GENOMIC DNA]</scope>
    <source>
        <strain>AAC00-1</strain>
    </source>
</reference>
<evidence type="ECO:0000255" key="1">
    <source>
        <dbReference type="HAMAP-Rule" id="MF_01302"/>
    </source>
</evidence>
<evidence type="ECO:0000305" key="2"/>
<accession>A1TJT1</accession>
<keyword id="KW-0687">Ribonucleoprotein</keyword>
<keyword id="KW-0689">Ribosomal protein</keyword>
<keyword id="KW-0694">RNA-binding</keyword>
<keyword id="KW-0699">rRNA-binding</keyword>
<proteinExistence type="inferred from homology"/>
<gene>
    <name evidence="1" type="primary">rpsH</name>
    <name type="ordered locus">Aave_0615</name>
</gene>
<dbReference type="EMBL" id="CP000512">
    <property type="protein sequence ID" value="ABM31219.1"/>
    <property type="molecule type" value="Genomic_DNA"/>
</dbReference>
<dbReference type="RefSeq" id="WP_011793790.1">
    <property type="nucleotide sequence ID" value="NC_008752.1"/>
</dbReference>
<dbReference type="SMR" id="A1TJT1"/>
<dbReference type="STRING" id="397945.Aave_0615"/>
<dbReference type="GeneID" id="79790329"/>
<dbReference type="KEGG" id="aav:Aave_0615"/>
<dbReference type="eggNOG" id="COG0096">
    <property type="taxonomic scope" value="Bacteria"/>
</dbReference>
<dbReference type="HOGENOM" id="CLU_098428_0_0_4"/>
<dbReference type="OrthoDB" id="9802617at2"/>
<dbReference type="Proteomes" id="UP000002596">
    <property type="component" value="Chromosome"/>
</dbReference>
<dbReference type="GO" id="GO:1990904">
    <property type="term" value="C:ribonucleoprotein complex"/>
    <property type="evidence" value="ECO:0007669"/>
    <property type="project" value="UniProtKB-KW"/>
</dbReference>
<dbReference type="GO" id="GO:0005840">
    <property type="term" value="C:ribosome"/>
    <property type="evidence" value="ECO:0007669"/>
    <property type="project" value="UniProtKB-KW"/>
</dbReference>
<dbReference type="GO" id="GO:0019843">
    <property type="term" value="F:rRNA binding"/>
    <property type="evidence" value="ECO:0007669"/>
    <property type="project" value="UniProtKB-UniRule"/>
</dbReference>
<dbReference type="GO" id="GO:0003735">
    <property type="term" value="F:structural constituent of ribosome"/>
    <property type="evidence" value="ECO:0007669"/>
    <property type="project" value="InterPro"/>
</dbReference>
<dbReference type="GO" id="GO:0006412">
    <property type="term" value="P:translation"/>
    <property type="evidence" value="ECO:0007669"/>
    <property type="project" value="UniProtKB-UniRule"/>
</dbReference>
<dbReference type="FunFam" id="3.30.1370.30:FF:000002">
    <property type="entry name" value="30S ribosomal protein S8"/>
    <property type="match status" value="1"/>
</dbReference>
<dbReference type="FunFam" id="3.30.1490.10:FF:000001">
    <property type="entry name" value="30S ribosomal protein S8"/>
    <property type="match status" value="1"/>
</dbReference>
<dbReference type="Gene3D" id="3.30.1370.30">
    <property type="match status" value="1"/>
</dbReference>
<dbReference type="Gene3D" id="3.30.1490.10">
    <property type="match status" value="1"/>
</dbReference>
<dbReference type="HAMAP" id="MF_01302_B">
    <property type="entry name" value="Ribosomal_uS8_B"/>
    <property type="match status" value="1"/>
</dbReference>
<dbReference type="InterPro" id="IPR000630">
    <property type="entry name" value="Ribosomal_uS8"/>
</dbReference>
<dbReference type="InterPro" id="IPR047863">
    <property type="entry name" value="Ribosomal_uS8_CS"/>
</dbReference>
<dbReference type="InterPro" id="IPR035987">
    <property type="entry name" value="Ribosomal_uS8_sf"/>
</dbReference>
<dbReference type="NCBIfam" id="NF001109">
    <property type="entry name" value="PRK00136.1"/>
    <property type="match status" value="1"/>
</dbReference>
<dbReference type="PANTHER" id="PTHR11758">
    <property type="entry name" value="40S RIBOSOMAL PROTEIN S15A"/>
    <property type="match status" value="1"/>
</dbReference>
<dbReference type="Pfam" id="PF00410">
    <property type="entry name" value="Ribosomal_S8"/>
    <property type="match status" value="1"/>
</dbReference>
<dbReference type="SUPFAM" id="SSF56047">
    <property type="entry name" value="Ribosomal protein S8"/>
    <property type="match status" value="1"/>
</dbReference>
<dbReference type="PROSITE" id="PS00053">
    <property type="entry name" value="RIBOSOMAL_S8"/>
    <property type="match status" value="1"/>
</dbReference>
<name>RS8_PARC0</name>